<sequence>MAKAKFERTKPHVNIGTIGHVDHGKTTLTAAITKVLHDKFPNLNESRAFDQIDNAPEERQRGITINISHVEYQTEKRHYAHVDAPGHADYIKNMITGAAQMDGAILVVAATDGPMPQTREHVLLARQVGVPYILVALNKSDAVDDEELLELVEMEVRELLAAQEFDEDAPVVRVSALKALEGDAKWVESVTQLMDAVDESIPAPVRETDKPFLMPVEDVFTITGRGTVVTGRVERGVVNVNEEVEIVGIRQTTTKTTVTGVEMFRKLLDQGQAGDNVGLLLRGIKREDVERGQVVIKPGTTTPHTEFEGQVYILSKDEGGRHTPFFNNYRPQFYFRTTDVTGVVTLPEGTEMVMPGDNTNISVTLIQPVAMDEGLRFAIREGGRTVGAGRVVKIIK</sequence>
<proteinExistence type="inferred from homology"/>
<gene>
    <name evidence="2" type="primary">tuf</name>
    <name type="ordered locus">MLBr01877</name>
</gene>
<keyword id="KW-0963">Cytoplasm</keyword>
<keyword id="KW-0251">Elongation factor</keyword>
<keyword id="KW-0342">GTP-binding</keyword>
<keyword id="KW-0378">Hydrolase</keyword>
<keyword id="KW-0460">Magnesium</keyword>
<keyword id="KW-0479">Metal-binding</keyword>
<keyword id="KW-0547">Nucleotide-binding</keyword>
<keyword id="KW-0648">Protein biosynthesis</keyword>
<feature type="chain" id="PRO_1000201408" description="Elongation factor Tu">
    <location>
        <begin position="1"/>
        <end position="396"/>
    </location>
</feature>
<feature type="domain" description="tr-type G">
    <location>
        <begin position="10"/>
        <end position="205"/>
    </location>
</feature>
<feature type="region of interest" description="G1" evidence="1">
    <location>
        <begin position="19"/>
        <end position="26"/>
    </location>
</feature>
<feature type="region of interest" description="G2" evidence="1">
    <location>
        <begin position="62"/>
        <end position="66"/>
    </location>
</feature>
<feature type="region of interest" description="G3" evidence="1">
    <location>
        <begin position="83"/>
        <end position="86"/>
    </location>
</feature>
<feature type="region of interest" description="G4" evidence="1">
    <location>
        <begin position="138"/>
        <end position="141"/>
    </location>
</feature>
<feature type="region of interest" description="G5" evidence="1">
    <location>
        <begin position="175"/>
        <end position="177"/>
    </location>
</feature>
<feature type="binding site" evidence="2">
    <location>
        <begin position="19"/>
        <end position="26"/>
    </location>
    <ligand>
        <name>GTP</name>
        <dbReference type="ChEBI" id="CHEBI:37565"/>
    </ligand>
</feature>
<feature type="binding site" evidence="2">
    <location>
        <position position="26"/>
    </location>
    <ligand>
        <name>Mg(2+)</name>
        <dbReference type="ChEBI" id="CHEBI:18420"/>
    </ligand>
</feature>
<feature type="binding site" evidence="2">
    <location>
        <begin position="83"/>
        <end position="87"/>
    </location>
    <ligand>
        <name>GTP</name>
        <dbReference type="ChEBI" id="CHEBI:37565"/>
    </ligand>
</feature>
<feature type="binding site" evidence="2">
    <location>
        <begin position="138"/>
        <end position="141"/>
    </location>
    <ligand>
        <name>GTP</name>
        <dbReference type="ChEBI" id="CHEBI:37565"/>
    </ligand>
</feature>
<reference key="1">
    <citation type="journal article" date="2009" name="Nat. Genet.">
        <title>Comparative genomic and phylogeographic analysis of Mycobacterium leprae.</title>
        <authorList>
            <person name="Monot M."/>
            <person name="Honore N."/>
            <person name="Garnier T."/>
            <person name="Zidane N."/>
            <person name="Sherafi D."/>
            <person name="Paniz-Mondolfi A."/>
            <person name="Matsuoka M."/>
            <person name="Taylor G.M."/>
            <person name="Donoghue H.D."/>
            <person name="Bouwman A."/>
            <person name="Mays S."/>
            <person name="Watson C."/>
            <person name="Lockwood D."/>
            <person name="Khamispour A."/>
            <person name="Dowlati Y."/>
            <person name="Jianping S."/>
            <person name="Rea T.H."/>
            <person name="Vera-Cabrera L."/>
            <person name="Stefani M.M."/>
            <person name="Banu S."/>
            <person name="Macdonald M."/>
            <person name="Sapkota B.R."/>
            <person name="Spencer J.S."/>
            <person name="Thomas J."/>
            <person name="Harshman K."/>
            <person name="Singh P."/>
            <person name="Busso P."/>
            <person name="Gattiker A."/>
            <person name="Rougemont J."/>
            <person name="Brennan P.J."/>
            <person name="Cole S.T."/>
        </authorList>
    </citation>
    <scope>NUCLEOTIDE SEQUENCE [LARGE SCALE GENOMIC DNA]</scope>
    <source>
        <strain>Br4923</strain>
    </source>
</reference>
<comment type="function">
    <text evidence="2">GTP hydrolase that promotes the GTP-dependent binding of aminoacyl-tRNA to the A-site of ribosomes during protein biosynthesis.</text>
</comment>
<comment type="catalytic activity">
    <reaction evidence="2">
        <text>GTP + H2O = GDP + phosphate + H(+)</text>
        <dbReference type="Rhea" id="RHEA:19669"/>
        <dbReference type="ChEBI" id="CHEBI:15377"/>
        <dbReference type="ChEBI" id="CHEBI:15378"/>
        <dbReference type="ChEBI" id="CHEBI:37565"/>
        <dbReference type="ChEBI" id="CHEBI:43474"/>
        <dbReference type="ChEBI" id="CHEBI:58189"/>
        <dbReference type="EC" id="3.6.5.3"/>
    </reaction>
    <physiologicalReaction direction="left-to-right" evidence="2">
        <dbReference type="Rhea" id="RHEA:19670"/>
    </physiologicalReaction>
</comment>
<comment type="subunit">
    <text evidence="2">Monomer.</text>
</comment>
<comment type="subcellular location">
    <subcellularLocation>
        <location evidence="2">Cytoplasm</location>
    </subcellularLocation>
</comment>
<comment type="similarity">
    <text evidence="2">Belongs to the TRAFAC class translation factor GTPase superfamily. Classic translation factor GTPase family. EF-Tu/EF-1A subfamily.</text>
</comment>
<evidence type="ECO:0000250" key="1"/>
<evidence type="ECO:0000255" key="2">
    <source>
        <dbReference type="HAMAP-Rule" id="MF_00118"/>
    </source>
</evidence>
<protein>
    <recommendedName>
        <fullName evidence="2">Elongation factor Tu</fullName>
        <shortName evidence="2">EF-Tu</shortName>
        <ecNumber evidence="2">3.6.5.3</ecNumber>
    </recommendedName>
</protein>
<name>EFTU_MYCLB</name>
<accession>B8ZSC1</accession>
<organism>
    <name type="scientific">Mycobacterium leprae (strain Br4923)</name>
    <dbReference type="NCBI Taxonomy" id="561304"/>
    <lineage>
        <taxon>Bacteria</taxon>
        <taxon>Bacillati</taxon>
        <taxon>Actinomycetota</taxon>
        <taxon>Actinomycetes</taxon>
        <taxon>Mycobacteriales</taxon>
        <taxon>Mycobacteriaceae</taxon>
        <taxon>Mycobacterium</taxon>
    </lineage>
</organism>
<dbReference type="EC" id="3.6.5.3" evidence="2"/>
<dbReference type="EMBL" id="FM211192">
    <property type="protein sequence ID" value="CAR71973.1"/>
    <property type="molecule type" value="Genomic_DNA"/>
</dbReference>
<dbReference type="SMR" id="B8ZSC1"/>
<dbReference type="KEGG" id="mlb:MLBr01877"/>
<dbReference type="HOGENOM" id="CLU_007265_0_1_11"/>
<dbReference type="Proteomes" id="UP000006900">
    <property type="component" value="Chromosome"/>
</dbReference>
<dbReference type="GO" id="GO:0005829">
    <property type="term" value="C:cytosol"/>
    <property type="evidence" value="ECO:0007669"/>
    <property type="project" value="TreeGrafter"/>
</dbReference>
<dbReference type="GO" id="GO:0005525">
    <property type="term" value="F:GTP binding"/>
    <property type="evidence" value="ECO:0007669"/>
    <property type="project" value="UniProtKB-UniRule"/>
</dbReference>
<dbReference type="GO" id="GO:0003924">
    <property type="term" value="F:GTPase activity"/>
    <property type="evidence" value="ECO:0007669"/>
    <property type="project" value="InterPro"/>
</dbReference>
<dbReference type="GO" id="GO:0003746">
    <property type="term" value="F:translation elongation factor activity"/>
    <property type="evidence" value="ECO:0007669"/>
    <property type="project" value="UniProtKB-UniRule"/>
</dbReference>
<dbReference type="CDD" id="cd01884">
    <property type="entry name" value="EF_Tu"/>
    <property type="match status" value="1"/>
</dbReference>
<dbReference type="CDD" id="cd03697">
    <property type="entry name" value="EFTU_II"/>
    <property type="match status" value="1"/>
</dbReference>
<dbReference type="CDD" id="cd03707">
    <property type="entry name" value="EFTU_III"/>
    <property type="match status" value="1"/>
</dbReference>
<dbReference type="FunFam" id="2.40.30.10:FF:000001">
    <property type="entry name" value="Elongation factor Tu"/>
    <property type="match status" value="1"/>
</dbReference>
<dbReference type="FunFam" id="3.40.50.300:FF:000003">
    <property type="entry name" value="Elongation factor Tu"/>
    <property type="match status" value="1"/>
</dbReference>
<dbReference type="Gene3D" id="3.40.50.300">
    <property type="entry name" value="P-loop containing nucleotide triphosphate hydrolases"/>
    <property type="match status" value="1"/>
</dbReference>
<dbReference type="Gene3D" id="2.40.30.10">
    <property type="entry name" value="Translation factors"/>
    <property type="match status" value="2"/>
</dbReference>
<dbReference type="HAMAP" id="MF_00118_B">
    <property type="entry name" value="EF_Tu_B"/>
    <property type="match status" value="1"/>
</dbReference>
<dbReference type="InterPro" id="IPR041709">
    <property type="entry name" value="EF-Tu_GTP-bd"/>
</dbReference>
<dbReference type="InterPro" id="IPR050055">
    <property type="entry name" value="EF-Tu_GTPase"/>
</dbReference>
<dbReference type="InterPro" id="IPR004161">
    <property type="entry name" value="EFTu-like_2"/>
</dbReference>
<dbReference type="InterPro" id="IPR033720">
    <property type="entry name" value="EFTU_2"/>
</dbReference>
<dbReference type="InterPro" id="IPR031157">
    <property type="entry name" value="G_TR_CS"/>
</dbReference>
<dbReference type="InterPro" id="IPR027417">
    <property type="entry name" value="P-loop_NTPase"/>
</dbReference>
<dbReference type="InterPro" id="IPR005225">
    <property type="entry name" value="Small_GTP-bd"/>
</dbReference>
<dbReference type="InterPro" id="IPR000795">
    <property type="entry name" value="T_Tr_GTP-bd_dom"/>
</dbReference>
<dbReference type="InterPro" id="IPR009000">
    <property type="entry name" value="Transl_B-barrel_sf"/>
</dbReference>
<dbReference type="InterPro" id="IPR009001">
    <property type="entry name" value="Transl_elong_EF1A/Init_IF2_C"/>
</dbReference>
<dbReference type="InterPro" id="IPR004541">
    <property type="entry name" value="Transl_elong_EFTu/EF1A_bac/org"/>
</dbReference>
<dbReference type="InterPro" id="IPR004160">
    <property type="entry name" value="Transl_elong_EFTu/EF1A_C"/>
</dbReference>
<dbReference type="NCBIfam" id="TIGR00485">
    <property type="entry name" value="EF-Tu"/>
    <property type="match status" value="1"/>
</dbReference>
<dbReference type="NCBIfam" id="NF000766">
    <property type="entry name" value="PRK00049.1"/>
    <property type="match status" value="1"/>
</dbReference>
<dbReference type="NCBIfam" id="NF009372">
    <property type="entry name" value="PRK12735.1"/>
    <property type="match status" value="1"/>
</dbReference>
<dbReference type="NCBIfam" id="NF009373">
    <property type="entry name" value="PRK12736.1"/>
    <property type="match status" value="1"/>
</dbReference>
<dbReference type="NCBIfam" id="TIGR00231">
    <property type="entry name" value="small_GTP"/>
    <property type="match status" value="1"/>
</dbReference>
<dbReference type="PANTHER" id="PTHR43721:SF22">
    <property type="entry name" value="ELONGATION FACTOR TU, MITOCHONDRIAL"/>
    <property type="match status" value="1"/>
</dbReference>
<dbReference type="PANTHER" id="PTHR43721">
    <property type="entry name" value="ELONGATION FACTOR TU-RELATED"/>
    <property type="match status" value="1"/>
</dbReference>
<dbReference type="Pfam" id="PF00009">
    <property type="entry name" value="GTP_EFTU"/>
    <property type="match status" value="1"/>
</dbReference>
<dbReference type="Pfam" id="PF03144">
    <property type="entry name" value="GTP_EFTU_D2"/>
    <property type="match status" value="1"/>
</dbReference>
<dbReference type="Pfam" id="PF03143">
    <property type="entry name" value="GTP_EFTU_D3"/>
    <property type="match status" value="1"/>
</dbReference>
<dbReference type="PRINTS" id="PR00315">
    <property type="entry name" value="ELONGATNFCT"/>
</dbReference>
<dbReference type="SUPFAM" id="SSF50465">
    <property type="entry name" value="EF-Tu/eEF-1alpha/eIF2-gamma C-terminal domain"/>
    <property type="match status" value="1"/>
</dbReference>
<dbReference type="SUPFAM" id="SSF52540">
    <property type="entry name" value="P-loop containing nucleoside triphosphate hydrolases"/>
    <property type="match status" value="1"/>
</dbReference>
<dbReference type="SUPFAM" id="SSF50447">
    <property type="entry name" value="Translation proteins"/>
    <property type="match status" value="1"/>
</dbReference>
<dbReference type="PROSITE" id="PS00301">
    <property type="entry name" value="G_TR_1"/>
    <property type="match status" value="1"/>
</dbReference>
<dbReference type="PROSITE" id="PS51722">
    <property type="entry name" value="G_TR_2"/>
    <property type="match status" value="1"/>
</dbReference>